<comment type="function">
    <text>Mnt acts as a transcriptional repressor of genes ant and arc.</text>
</comment>
<comment type="subunit">
    <text>Binds DNA as a homotetramer.</text>
</comment>
<comment type="similarity">
    <text evidence="1">Belongs to the p22 arc/mnt family.</text>
</comment>
<evidence type="ECO:0000305" key="1"/>
<evidence type="ECO:0007829" key="2">
    <source>
        <dbReference type="PDB" id="1MNT"/>
    </source>
</evidence>
<feature type="initiator methionine" description="Removed; by host">
    <location>
        <position position="1"/>
    </location>
</feature>
<feature type="chain" id="PRO_0000077736" description="Regulatory protein mnt">
    <location>
        <begin position="2"/>
        <end position="83"/>
    </location>
</feature>
<feature type="strand" evidence="2">
    <location>
        <begin position="9"/>
        <end position="11"/>
    </location>
</feature>
<feature type="helix" evidence="2">
    <location>
        <begin position="14"/>
        <end position="22"/>
    </location>
</feature>
<feature type="helix" evidence="2">
    <location>
        <begin position="24"/>
        <end position="27"/>
    </location>
</feature>
<feature type="helix" evidence="2">
    <location>
        <begin position="32"/>
        <end position="44"/>
    </location>
</feature>
<feature type="strand" evidence="2">
    <location>
        <begin position="49"/>
        <end position="51"/>
    </location>
</feature>
<feature type="helix" evidence="2">
    <location>
        <begin position="56"/>
        <end position="65"/>
    </location>
</feature>
<protein>
    <recommendedName>
        <fullName>Regulatory protein mnt</fullName>
    </recommendedName>
</protein>
<keyword id="KW-0002">3D-structure</keyword>
<keyword id="KW-0238">DNA-binding</keyword>
<keyword id="KW-1185">Reference proteome</keyword>
<keyword id="KW-0678">Repressor</keyword>
<keyword id="KW-0804">Transcription</keyword>
<keyword id="KW-0805">Transcription regulation</keyword>
<reference key="1">
    <citation type="journal article" date="1983" name="J. Mol. Biol.">
        <title>Primary structure of the immI immunity region of bacteriophage P22.</title>
        <authorList>
            <person name="Sauer R.T."/>
            <person name="Krovatin W."/>
            <person name="Deanda J."/>
            <person name="Youderian P."/>
            <person name="Susskind M.M."/>
        </authorList>
    </citation>
    <scope>NUCLEOTIDE SEQUENCE [GENOMIC DNA]</scope>
</reference>
<reference key="2">
    <citation type="journal article" date="2000" name="J. Bacteriol.">
        <title>Sequence of the genome of Salmonella bacteriophage P22.</title>
        <authorList>
            <person name="Vander Byl C.S."/>
            <person name="Kropinski A.M.B."/>
        </authorList>
    </citation>
    <scope>NUCLEOTIDE SEQUENCE [LARGE SCALE GENOMIC DNA]</scope>
</reference>
<reference key="3">
    <citation type="journal article" date="2003" name="J. Bacteriol.">
        <title>Corrected sequence of the bacteriophage P22 genome.</title>
        <authorList>
            <person name="Pedulla M.L."/>
            <person name="Ford M.E."/>
            <person name="Karthikeyan T."/>
            <person name="Houtz J.M."/>
            <person name="Hendrix R.W."/>
            <person name="Hatfull G.F."/>
            <person name="Poteete A.R."/>
            <person name="Gilcrease E.B."/>
            <person name="Winn-Stapley D.A."/>
            <person name="Casjens S.R."/>
        </authorList>
    </citation>
    <scope>NUCLEOTIDE SEQUENCE [LARGE SCALE GENOMIC DNA]</scope>
</reference>
<reference key="4">
    <citation type="journal article" date="1994" name="Biochemistry">
        <title>Solution structure of dimeric Mnt repressor (1-76).</title>
        <authorList>
            <person name="Burgering M.J.M."/>
            <person name="Boelens R."/>
            <person name="Gilbert D.E."/>
            <person name="Breg J.N."/>
            <person name="Knight K.L."/>
            <person name="Sauer R.T."/>
            <person name="Kaptein R."/>
        </authorList>
    </citation>
    <scope>STRUCTURE BY NMR OF 1-77</scope>
</reference>
<reference key="5">
    <citation type="journal article" date="1999" name="Nat. Struct. Biol.">
        <title>The tetramerization domain of the Mnt repressor consists of two right-handed coiled coils.</title>
        <authorList>
            <person name="Nooren I.M."/>
            <person name="Kaptein R."/>
            <person name="Sauer R.T."/>
            <person name="Boelens R."/>
        </authorList>
    </citation>
    <scope>STRUCTURE BY NMR OF 53-83</scope>
</reference>
<accession>P03049</accession>
<accession>Q7PCJ4</accession>
<organism>
    <name type="scientific">Salmonella phage P22</name>
    <name type="common">Bacteriophage P22</name>
    <dbReference type="NCBI Taxonomy" id="10754"/>
    <lineage>
        <taxon>Viruses</taxon>
        <taxon>Duplodnaviria</taxon>
        <taxon>Heunggongvirae</taxon>
        <taxon>Uroviricota</taxon>
        <taxon>Caudoviricetes</taxon>
        <taxon>Lederbergvirus</taxon>
    </lineage>
</organism>
<proteinExistence type="evidence at protein level"/>
<dbReference type="EMBL" id="X01916">
    <property type="protein sequence ID" value="CAA25989.1"/>
    <property type="molecule type" value="Genomic_DNA"/>
</dbReference>
<dbReference type="EMBL" id="AF217253">
    <property type="protein sequence ID" value="AAF75057.1"/>
    <property type="molecule type" value="Genomic_DNA"/>
</dbReference>
<dbReference type="EMBL" id="BK000583">
    <property type="protein sequence ID" value="DAA00978.1"/>
    <property type="molecule type" value="Genomic_DNA"/>
</dbReference>
<dbReference type="PIR" id="A03585">
    <property type="entry name" value="RGBPM2"/>
</dbReference>
<dbReference type="RefSeq" id="NP_059641.1">
    <property type="nucleotide sequence ID" value="NC_002371.2"/>
</dbReference>
<dbReference type="PDB" id="1MNT">
    <property type="method" value="NMR"/>
    <property type="chains" value="A/B=2-77"/>
</dbReference>
<dbReference type="PDB" id="1QEY">
    <property type="method" value="NMR"/>
    <property type="chains" value="A/B/C/D=53-83"/>
</dbReference>
<dbReference type="PDBsum" id="1MNT"/>
<dbReference type="PDBsum" id="1QEY"/>
<dbReference type="BMRB" id="P03049"/>
<dbReference type="SMR" id="P03049"/>
<dbReference type="GeneID" id="1262808"/>
<dbReference type="KEGG" id="vg:1262808"/>
<dbReference type="OrthoDB" id="20350at10239"/>
<dbReference type="EvolutionaryTrace" id="P03049"/>
<dbReference type="Proteomes" id="UP000001795">
    <property type="component" value="Segment"/>
</dbReference>
<dbReference type="Proteomes" id="UP000007960">
    <property type="component" value="Segment"/>
</dbReference>
<dbReference type="GO" id="GO:0003677">
    <property type="term" value="F:DNA binding"/>
    <property type="evidence" value="ECO:0007669"/>
    <property type="project" value="UniProtKB-KW"/>
</dbReference>
<dbReference type="GO" id="GO:0006355">
    <property type="term" value="P:regulation of DNA-templated transcription"/>
    <property type="evidence" value="ECO:0007669"/>
    <property type="project" value="InterPro"/>
</dbReference>
<dbReference type="Gene3D" id="1.10.1220.10">
    <property type="entry name" value="Met repressor-like"/>
    <property type="match status" value="1"/>
</dbReference>
<dbReference type="InterPro" id="IPR005569">
    <property type="entry name" value="Arc_DNA-bd_dom"/>
</dbReference>
<dbReference type="InterPro" id="IPR013321">
    <property type="entry name" value="Arc_rbn_hlx_hlx"/>
</dbReference>
<dbReference type="InterPro" id="IPR024421">
    <property type="entry name" value="Phage_P22_Mnt"/>
</dbReference>
<dbReference type="InterPro" id="IPR010985">
    <property type="entry name" value="Ribbon_hlx_hlx"/>
</dbReference>
<dbReference type="Pfam" id="PF03869">
    <property type="entry name" value="Arc"/>
    <property type="match status" value="1"/>
</dbReference>
<dbReference type="Pfam" id="PF11423">
    <property type="entry name" value="Repressor_Mnt"/>
    <property type="match status" value="1"/>
</dbReference>
<dbReference type="SUPFAM" id="SSF47598">
    <property type="entry name" value="Ribbon-helix-helix"/>
    <property type="match status" value="1"/>
</dbReference>
<dbReference type="SUPFAM" id="SSF58059">
    <property type="entry name" value="Tetramerization domain of the Mnt repressor"/>
    <property type="match status" value="1"/>
</dbReference>
<organismHost>
    <name type="scientific">Salmonella typhimurium</name>
    <dbReference type="NCBI Taxonomy" id="90371"/>
</organismHost>
<name>RMNT_BPP22</name>
<sequence length="83" mass="9678">MARDDPHFNFRMPMEVREKLKFRAEANGRSMNSELLQIVQDALSKPSPVTGYRNDAERLADEQSELVKKMVFDTLKDLYKKTT</sequence>
<gene>
    <name type="primary">mnt</name>
</gene>